<proteinExistence type="inferred from homology"/>
<protein>
    <recommendedName>
        <fullName evidence="1">Urease accessory protein UreF</fullName>
    </recommendedName>
</protein>
<feature type="chain" id="PRO_0000067659" description="Urease accessory protein UreF">
    <location>
        <begin position="1"/>
        <end position="228"/>
    </location>
</feature>
<organism>
    <name type="scientific">Yersinia pseudotuberculosis serotype I (strain IP32953)</name>
    <dbReference type="NCBI Taxonomy" id="273123"/>
    <lineage>
        <taxon>Bacteria</taxon>
        <taxon>Pseudomonadati</taxon>
        <taxon>Pseudomonadota</taxon>
        <taxon>Gammaproteobacteria</taxon>
        <taxon>Enterobacterales</taxon>
        <taxon>Yersiniaceae</taxon>
        <taxon>Yersinia</taxon>
    </lineage>
</organism>
<dbReference type="EMBL" id="U40842">
    <property type="protein sequence ID" value="AAA87856.2"/>
    <property type="molecule type" value="Genomic_DNA"/>
</dbReference>
<dbReference type="EMBL" id="BX936398">
    <property type="protein sequence ID" value="CAH22178.1"/>
    <property type="molecule type" value="Genomic_DNA"/>
</dbReference>
<dbReference type="RefSeq" id="WP_011192843.1">
    <property type="nucleotide sequence ID" value="NC_006155.1"/>
</dbReference>
<dbReference type="SMR" id="P52318"/>
<dbReference type="KEGG" id="ypo:BZ17_3688"/>
<dbReference type="KEGG" id="yps:YPTB2940"/>
<dbReference type="PATRIC" id="fig|273123.14.peg.3866"/>
<dbReference type="Proteomes" id="UP000001011">
    <property type="component" value="Chromosome"/>
</dbReference>
<dbReference type="GO" id="GO:0005737">
    <property type="term" value="C:cytoplasm"/>
    <property type="evidence" value="ECO:0007669"/>
    <property type="project" value="UniProtKB-SubCell"/>
</dbReference>
<dbReference type="GO" id="GO:0016151">
    <property type="term" value="F:nickel cation binding"/>
    <property type="evidence" value="ECO:0007669"/>
    <property type="project" value="UniProtKB-UniRule"/>
</dbReference>
<dbReference type="Gene3D" id="1.10.4190.10">
    <property type="entry name" value="Urease accessory protein UreF"/>
    <property type="match status" value="1"/>
</dbReference>
<dbReference type="HAMAP" id="MF_01385">
    <property type="entry name" value="UreF"/>
    <property type="match status" value="1"/>
</dbReference>
<dbReference type="InterPro" id="IPR002639">
    <property type="entry name" value="UreF"/>
</dbReference>
<dbReference type="InterPro" id="IPR038277">
    <property type="entry name" value="UreF_sf"/>
</dbReference>
<dbReference type="PANTHER" id="PTHR33620">
    <property type="entry name" value="UREASE ACCESSORY PROTEIN F"/>
    <property type="match status" value="1"/>
</dbReference>
<dbReference type="PANTHER" id="PTHR33620:SF1">
    <property type="entry name" value="UREASE ACCESSORY PROTEIN F"/>
    <property type="match status" value="1"/>
</dbReference>
<dbReference type="Pfam" id="PF01730">
    <property type="entry name" value="UreF"/>
    <property type="match status" value="1"/>
</dbReference>
<dbReference type="PIRSF" id="PIRSF009467">
    <property type="entry name" value="Ureas_acces_UreF"/>
    <property type="match status" value="1"/>
</dbReference>
<reference key="1">
    <citation type="journal article" date="1997" name="Infect. Immun.">
        <title>Urease is not involved in the virulence of Yersinia pseudotuberculosis in mice.</title>
        <authorList>
            <person name="Riot B."/>
            <person name="Berche P."/>
            <person name="Simonet M."/>
        </authorList>
    </citation>
    <scope>NUCLEOTIDE SEQUENCE [GENOMIC DNA]</scope>
    <source>
        <strain>IP 2777</strain>
    </source>
</reference>
<reference key="2">
    <citation type="submission" date="1999-12" db="EMBL/GenBank/DDBJ databases">
        <authorList>
            <person name="Riot B."/>
        </authorList>
    </citation>
    <scope>SEQUENCE REVISION TO 5-9 AND 168-171</scope>
</reference>
<reference key="3">
    <citation type="journal article" date="2004" name="Proc. Natl. Acad. Sci. U.S.A.">
        <title>Insights into the evolution of Yersinia pestis through whole-genome comparison with Yersinia pseudotuberculosis.</title>
        <authorList>
            <person name="Chain P.S.G."/>
            <person name="Carniel E."/>
            <person name="Larimer F.W."/>
            <person name="Lamerdin J."/>
            <person name="Stoutland P.O."/>
            <person name="Regala W.M."/>
            <person name="Georgescu A.M."/>
            <person name="Vergez L.M."/>
            <person name="Land M.L."/>
            <person name="Motin V.L."/>
            <person name="Brubaker R.R."/>
            <person name="Fowler J."/>
            <person name="Hinnebusch J."/>
            <person name="Marceau M."/>
            <person name="Medigue C."/>
            <person name="Simonet M."/>
            <person name="Chenal-Francisque V."/>
            <person name="Souza B."/>
            <person name="Dacheux D."/>
            <person name="Elliott J.M."/>
            <person name="Derbise A."/>
            <person name="Hauser L.J."/>
            <person name="Garcia E."/>
        </authorList>
    </citation>
    <scope>NUCLEOTIDE SEQUENCE [LARGE SCALE GENOMIC DNA]</scope>
    <source>
        <strain>IP32953</strain>
    </source>
</reference>
<accession>P52318</accession>
<accession>Q667Q2</accession>
<name>UREF_YERPS</name>
<sequence>MNASDLIRIMQFGDSVLPVGAFTFSNGVESAIQTGIVHDVATLKGFVLTALKQAASCDGMGVVAAHRAVVADDRDGIIRADWAVNNRKLNEESRLMATRMGKKLAEMSIHVVEHPLISWWLEQIKNGNTAGTYPVTQAVVMAAQGIGQREVVVMHQYGVAMTILSAAMRLMRVTHFDTQHILFELNHDIEKFCDIAEIGDINQMSSYVPIVDVLAAVHVKAHVRLFSN</sequence>
<keyword id="KW-0143">Chaperone</keyword>
<keyword id="KW-0963">Cytoplasm</keyword>
<keyword id="KW-0996">Nickel insertion</keyword>
<gene>
    <name evidence="1" type="primary">ureF</name>
    <name type="ordered locus">YPTB2940</name>
</gene>
<evidence type="ECO:0000255" key="1">
    <source>
        <dbReference type="HAMAP-Rule" id="MF_01385"/>
    </source>
</evidence>
<comment type="function">
    <text evidence="1">Required for maturation of urease via the functional incorporation of the urease nickel metallocenter.</text>
</comment>
<comment type="subunit">
    <text evidence="1">UreD, UreF and UreG form a complex that acts as a GTP-hydrolysis-dependent molecular chaperone, activating the urease apoprotein by helping to assemble the nickel containing metallocenter of UreC. The UreE protein probably delivers the nickel.</text>
</comment>
<comment type="subcellular location">
    <subcellularLocation>
        <location evidence="1">Cytoplasm</location>
    </subcellularLocation>
</comment>
<comment type="similarity">
    <text evidence="1">Belongs to the UreF family.</text>
</comment>